<dbReference type="EMBL" id="AJ235271">
    <property type="protein sequence ID" value="CAA14895.1"/>
    <property type="status" value="ALT_INIT"/>
    <property type="molecule type" value="Genomic_DNA"/>
</dbReference>
<dbReference type="PIR" id="E71702">
    <property type="entry name" value="E71702"/>
</dbReference>
<dbReference type="RefSeq" id="NP_220819.1">
    <property type="nucleotide sequence ID" value="NC_000963.1"/>
</dbReference>
<dbReference type="RefSeq" id="WP_004597652.1">
    <property type="nucleotide sequence ID" value="NC_000963.1"/>
</dbReference>
<dbReference type="SMR" id="Q9ZDA4"/>
<dbReference type="STRING" id="272947.gene:17555518"/>
<dbReference type="EnsemblBacteria" id="CAA14895">
    <property type="protein sequence ID" value="CAA14895"/>
    <property type="gene ID" value="CAA14895"/>
</dbReference>
<dbReference type="GeneID" id="57569563"/>
<dbReference type="KEGG" id="rpr:RP438"/>
<dbReference type="PATRIC" id="fig|272947.5.peg.451"/>
<dbReference type="eggNOG" id="COG0353">
    <property type="taxonomic scope" value="Bacteria"/>
</dbReference>
<dbReference type="HOGENOM" id="CLU_060739_1_0_5"/>
<dbReference type="OrthoDB" id="9802672at2"/>
<dbReference type="Proteomes" id="UP000002480">
    <property type="component" value="Chromosome"/>
</dbReference>
<dbReference type="GO" id="GO:0003677">
    <property type="term" value="F:DNA binding"/>
    <property type="evidence" value="ECO:0007669"/>
    <property type="project" value="UniProtKB-UniRule"/>
</dbReference>
<dbReference type="GO" id="GO:0008270">
    <property type="term" value="F:zinc ion binding"/>
    <property type="evidence" value="ECO:0007669"/>
    <property type="project" value="UniProtKB-KW"/>
</dbReference>
<dbReference type="GO" id="GO:0006310">
    <property type="term" value="P:DNA recombination"/>
    <property type="evidence" value="ECO:0007669"/>
    <property type="project" value="UniProtKB-UniRule"/>
</dbReference>
<dbReference type="GO" id="GO:0006281">
    <property type="term" value="P:DNA repair"/>
    <property type="evidence" value="ECO:0007669"/>
    <property type="project" value="UniProtKB-UniRule"/>
</dbReference>
<dbReference type="CDD" id="cd01025">
    <property type="entry name" value="TOPRIM_recR"/>
    <property type="match status" value="1"/>
</dbReference>
<dbReference type="Gene3D" id="3.40.1360.10">
    <property type="match status" value="1"/>
</dbReference>
<dbReference type="Gene3D" id="6.10.250.240">
    <property type="match status" value="1"/>
</dbReference>
<dbReference type="Gene3D" id="1.10.8.420">
    <property type="entry name" value="RecR Domain 1"/>
    <property type="match status" value="1"/>
</dbReference>
<dbReference type="HAMAP" id="MF_00017">
    <property type="entry name" value="RecR"/>
    <property type="match status" value="1"/>
</dbReference>
<dbReference type="InterPro" id="IPR000093">
    <property type="entry name" value="DNA_Rcmb_RecR"/>
</dbReference>
<dbReference type="InterPro" id="IPR023627">
    <property type="entry name" value="Rcmb_RecR"/>
</dbReference>
<dbReference type="InterPro" id="IPR015967">
    <property type="entry name" value="Rcmb_RecR_Znf"/>
</dbReference>
<dbReference type="InterPro" id="IPR006171">
    <property type="entry name" value="TOPRIM_dom"/>
</dbReference>
<dbReference type="InterPro" id="IPR034137">
    <property type="entry name" value="TOPRIM_RecR"/>
</dbReference>
<dbReference type="NCBIfam" id="TIGR00615">
    <property type="entry name" value="recR"/>
    <property type="match status" value="1"/>
</dbReference>
<dbReference type="PANTHER" id="PTHR30446">
    <property type="entry name" value="RECOMBINATION PROTEIN RECR"/>
    <property type="match status" value="1"/>
</dbReference>
<dbReference type="PANTHER" id="PTHR30446:SF0">
    <property type="entry name" value="RECOMBINATION PROTEIN RECR"/>
    <property type="match status" value="1"/>
</dbReference>
<dbReference type="Pfam" id="PF21175">
    <property type="entry name" value="RecR_C"/>
    <property type="match status" value="1"/>
</dbReference>
<dbReference type="Pfam" id="PF21176">
    <property type="entry name" value="RecR_HhH"/>
    <property type="match status" value="1"/>
</dbReference>
<dbReference type="Pfam" id="PF02132">
    <property type="entry name" value="RecR_ZnF"/>
    <property type="match status" value="1"/>
</dbReference>
<dbReference type="Pfam" id="PF13662">
    <property type="entry name" value="Toprim_4"/>
    <property type="match status" value="1"/>
</dbReference>
<dbReference type="SMART" id="SM00493">
    <property type="entry name" value="TOPRIM"/>
    <property type="match status" value="1"/>
</dbReference>
<dbReference type="SUPFAM" id="SSF111304">
    <property type="entry name" value="Recombination protein RecR"/>
    <property type="match status" value="1"/>
</dbReference>
<dbReference type="PROSITE" id="PS01300">
    <property type="entry name" value="RECR"/>
    <property type="match status" value="1"/>
</dbReference>
<dbReference type="PROSITE" id="PS50880">
    <property type="entry name" value="TOPRIM"/>
    <property type="match status" value="1"/>
</dbReference>
<sequence>MNKTNDIDQLIYLFSKLPGLGIRSARRIVLYLLQDKDVRLKSLINHLIELDKKIVKCEICGNLDTKSICHICSSEYRDKSTIAIVETVAELCAMERSGNFKGLYHVLGHNLSAASRQNPRILRLPELLKRCFVENIKEVIIATNSTLEGQTTAYFIIEYLKEHPAKISRLASGIPIGGELDYLDEGTLSAAISLRQPCE</sequence>
<gene>
    <name evidence="1" type="primary">recR</name>
    <name type="ordered locus">RP438</name>
</gene>
<organism>
    <name type="scientific">Rickettsia prowazekii (strain Madrid E)</name>
    <dbReference type="NCBI Taxonomy" id="272947"/>
    <lineage>
        <taxon>Bacteria</taxon>
        <taxon>Pseudomonadati</taxon>
        <taxon>Pseudomonadota</taxon>
        <taxon>Alphaproteobacteria</taxon>
        <taxon>Rickettsiales</taxon>
        <taxon>Rickettsiaceae</taxon>
        <taxon>Rickettsieae</taxon>
        <taxon>Rickettsia</taxon>
        <taxon>typhus group</taxon>
    </lineage>
</organism>
<evidence type="ECO:0000255" key="1">
    <source>
        <dbReference type="HAMAP-Rule" id="MF_00017"/>
    </source>
</evidence>
<evidence type="ECO:0000305" key="2"/>
<accession>Q9ZDA4</accession>
<protein>
    <recommendedName>
        <fullName evidence="1">Recombination protein RecR</fullName>
    </recommendedName>
</protein>
<feature type="chain" id="PRO_0000190376" description="Recombination protein RecR">
    <location>
        <begin position="1"/>
        <end position="199"/>
    </location>
</feature>
<feature type="domain" description="Toprim" evidence="1">
    <location>
        <begin position="80"/>
        <end position="175"/>
    </location>
</feature>
<feature type="zinc finger region" description="C4-type" evidence="1">
    <location>
        <begin position="57"/>
        <end position="72"/>
    </location>
</feature>
<comment type="function">
    <text evidence="1">May play a role in DNA repair. It seems to be involved in an RecBC-independent recombinational process of DNA repair. It may act with RecF and RecO.</text>
</comment>
<comment type="similarity">
    <text evidence="1">Belongs to the RecR family.</text>
</comment>
<comment type="sequence caution" evidence="2">
    <conflict type="erroneous initiation">
        <sequence resource="EMBL-CDS" id="CAA14895"/>
    </conflict>
</comment>
<name>RECR_RICPR</name>
<reference key="1">
    <citation type="journal article" date="1998" name="Nature">
        <title>The genome sequence of Rickettsia prowazekii and the origin of mitochondria.</title>
        <authorList>
            <person name="Andersson S.G.E."/>
            <person name="Zomorodipour A."/>
            <person name="Andersson J.O."/>
            <person name="Sicheritz-Ponten T."/>
            <person name="Alsmark U.C.M."/>
            <person name="Podowski R.M."/>
            <person name="Naeslund A.K."/>
            <person name="Eriksson A.-S."/>
            <person name="Winkler H.H."/>
            <person name="Kurland C.G."/>
        </authorList>
    </citation>
    <scope>NUCLEOTIDE SEQUENCE [LARGE SCALE GENOMIC DNA]</scope>
    <source>
        <strain>Madrid E</strain>
    </source>
</reference>
<keyword id="KW-0227">DNA damage</keyword>
<keyword id="KW-0233">DNA recombination</keyword>
<keyword id="KW-0234">DNA repair</keyword>
<keyword id="KW-0479">Metal-binding</keyword>
<keyword id="KW-1185">Reference proteome</keyword>
<keyword id="KW-0862">Zinc</keyword>
<keyword id="KW-0863">Zinc-finger</keyword>
<proteinExistence type="inferred from homology"/>